<comment type="function">
    <text evidence="2">Catalyzes oxidation of D-erythronate to 2-oxo-tetronate. Can use either NAD(+) or NADP(+) as cosubstrate, with a preference for NAD(+).</text>
</comment>
<comment type="catalytic activity">
    <reaction evidence="2">
        <text>D-erythronate + NAD(+) = 2-dehydro-D-erythronate + NADH + H(+)</text>
        <dbReference type="Rhea" id="RHEA:52544"/>
        <dbReference type="ChEBI" id="CHEBI:15378"/>
        <dbReference type="ChEBI" id="CHEBI:57540"/>
        <dbReference type="ChEBI" id="CHEBI:57945"/>
        <dbReference type="ChEBI" id="CHEBI:136591"/>
        <dbReference type="ChEBI" id="CHEBI:136668"/>
        <dbReference type="EC" id="1.1.1.410"/>
    </reaction>
</comment>
<comment type="biophysicochemical properties">
    <kinetics>
        <KM evidence="2">0.59 mM for NAD(+)</KM>
        <KM evidence="2">2.4 mM for NADP(+)</KM>
        <text evidence="2">kcat is 19 sec(-1) with NAD(+) as cosubstrate. kcat is 3.0 sec(-1) with NADP(+) as cosubstrate.</text>
    </kinetics>
</comment>
<comment type="disruption phenotype">
    <text evidence="2">Deletion mutant is unable to use D-erythronate as a carbon source.</text>
</comment>
<comment type="similarity">
    <text evidence="4">Belongs to the NAD(P)-dependent epimerase/dehydratase family.</text>
</comment>
<protein>
    <recommendedName>
        <fullName evidence="3">D-erythronate dehydrogenase</fullName>
        <ecNumber evidence="2">1.1.1.410</ecNumber>
    </recommendedName>
</protein>
<reference key="1">
    <citation type="journal article" date="2006" name="Nat. Biotechnol.">
        <title>Genome sequence of the bioplastic-producing 'Knallgas' bacterium Ralstonia eutropha H16.</title>
        <authorList>
            <person name="Pohlmann A."/>
            <person name="Fricke W.F."/>
            <person name="Reinecke F."/>
            <person name="Kusian B."/>
            <person name="Liesegang H."/>
            <person name="Cramm R."/>
            <person name="Eitinger T."/>
            <person name="Ewering C."/>
            <person name="Poetter M."/>
            <person name="Schwartz E."/>
            <person name="Strittmatter A."/>
            <person name="Voss I."/>
            <person name="Gottschalk G."/>
            <person name="Steinbuechel A."/>
            <person name="Friedrich B."/>
            <person name="Bowien B."/>
        </authorList>
    </citation>
    <scope>NUCLEOTIDE SEQUENCE [LARGE SCALE GENOMIC DNA]</scope>
    <source>
        <strain>ATCC 17699 / DSM 428 / KCTC 22496 / NCIMB 10442 / H16 / Stanier 337</strain>
    </source>
</reference>
<reference key="2">
    <citation type="journal article" date="2016" name="Proc. Natl. Acad. Sci. U.S.A.">
        <title>Assignment of function to a domain of unknown function: DUF1537 is a new kinase family in catabolic pathways for acid sugars.</title>
        <authorList>
            <person name="Zhang X."/>
            <person name="Carter M.S."/>
            <person name="Vetting M.W."/>
            <person name="San Francisco B."/>
            <person name="Zhao S."/>
            <person name="Al-Obaidi N.F."/>
            <person name="Solbiati J.O."/>
            <person name="Thiaville J.J."/>
            <person name="de Crecy-Lagard V."/>
            <person name="Jacobson M.P."/>
            <person name="Almo S.C."/>
            <person name="Gerlt J.A."/>
        </authorList>
    </citation>
    <scope>FUNCTION</scope>
    <scope>CATALYTIC ACTIVITY</scope>
    <scope>BIOPHYSICOCHEMICAL PROPERTIES</scope>
    <scope>DISRUPTION PHENOTYPE</scope>
    <source>
        <strain>ATCC 17699 / DSM 428 / KCTC 22496 / NCIMB 10442 / H16 / Stanier 337</strain>
    </source>
</reference>
<evidence type="ECO:0000250" key="1">
    <source>
        <dbReference type="UniProtKB" id="P09147"/>
    </source>
</evidence>
<evidence type="ECO:0000269" key="2">
    <source>
    </source>
</evidence>
<evidence type="ECO:0000303" key="3">
    <source>
    </source>
</evidence>
<evidence type="ECO:0000305" key="4"/>
<evidence type="ECO:0000312" key="5">
    <source>
        <dbReference type="EMBL" id="CAJ92689.1"/>
    </source>
</evidence>
<name>DEND_CUPNH</name>
<proteinExistence type="evidence at protein level"/>
<feature type="chain" id="PRO_0000439746" description="D-erythronate dehydrogenase">
    <location>
        <begin position="1"/>
        <end position="324"/>
    </location>
</feature>
<feature type="active site" description="Proton acceptor" evidence="1">
    <location>
        <position position="149"/>
    </location>
</feature>
<feature type="binding site" evidence="1">
    <location>
        <position position="125"/>
    </location>
    <ligand>
        <name>NAD(+)</name>
        <dbReference type="ChEBI" id="CHEBI:57540"/>
    </ligand>
</feature>
<feature type="binding site" evidence="1">
    <location>
        <position position="149"/>
    </location>
    <ligand>
        <name>NAD(+)</name>
        <dbReference type="ChEBI" id="CHEBI:57540"/>
    </ligand>
</feature>
<feature type="binding site" evidence="1">
    <location>
        <position position="153"/>
    </location>
    <ligand>
        <name>NAD(+)</name>
        <dbReference type="ChEBI" id="CHEBI:57540"/>
    </ligand>
</feature>
<dbReference type="EC" id="1.1.1.410" evidence="2"/>
<dbReference type="EMBL" id="AM260479">
    <property type="protein sequence ID" value="CAJ92689.1"/>
    <property type="molecule type" value="Genomic_DNA"/>
</dbReference>
<dbReference type="RefSeq" id="WP_011615150.1">
    <property type="nucleotide sequence ID" value="NC_008313.1"/>
</dbReference>
<dbReference type="SMR" id="Q0KBD2"/>
<dbReference type="STRING" id="381666.H16_A1557"/>
<dbReference type="KEGG" id="reh:H16_A1557"/>
<dbReference type="PATRIC" id="fig|381666.6.peg.1942"/>
<dbReference type="eggNOG" id="COG0451">
    <property type="taxonomic scope" value="Bacteria"/>
</dbReference>
<dbReference type="HOGENOM" id="CLU_007383_19_0_4"/>
<dbReference type="OrthoDB" id="9801056at2"/>
<dbReference type="BRENDA" id="1.1.1.410">
    <property type="organism ID" value="231"/>
</dbReference>
<dbReference type="Proteomes" id="UP000008210">
    <property type="component" value="Chromosome 1"/>
</dbReference>
<dbReference type="GO" id="GO:0016491">
    <property type="term" value="F:oxidoreductase activity"/>
    <property type="evidence" value="ECO:0007669"/>
    <property type="project" value="UniProtKB-KW"/>
</dbReference>
<dbReference type="CDD" id="cd05238">
    <property type="entry name" value="Gne_like_SDR_e"/>
    <property type="match status" value="1"/>
</dbReference>
<dbReference type="Gene3D" id="3.40.50.720">
    <property type="entry name" value="NAD(P)-binding Rossmann-like Domain"/>
    <property type="match status" value="1"/>
</dbReference>
<dbReference type="Gene3D" id="3.90.25.10">
    <property type="entry name" value="UDP-galactose 4-epimerase, domain 1"/>
    <property type="match status" value="1"/>
</dbReference>
<dbReference type="InterPro" id="IPR050005">
    <property type="entry name" value="DenD"/>
</dbReference>
<dbReference type="InterPro" id="IPR001509">
    <property type="entry name" value="Epimerase_deHydtase"/>
</dbReference>
<dbReference type="InterPro" id="IPR036291">
    <property type="entry name" value="NAD(P)-bd_dom_sf"/>
</dbReference>
<dbReference type="NCBIfam" id="NF043036">
    <property type="entry name" value="ErythonDh"/>
    <property type="match status" value="1"/>
</dbReference>
<dbReference type="PANTHER" id="PTHR43103:SF3">
    <property type="entry name" value="ADP-L-GLYCERO-D-MANNO-HEPTOSE-6-EPIMERASE"/>
    <property type="match status" value="1"/>
</dbReference>
<dbReference type="PANTHER" id="PTHR43103">
    <property type="entry name" value="NUCLEOSIDE-DIPHOSPHATE-SUGAR EPIMERASE"/>
    <property type="match status" value="1"/>
</dbReference>
<dbReference type="Pfam" id="PF01370">
    <property type="entry name" value="Epimerase"/>
    <property type="match status" value="1"/>
</dbReference>
<dbReference type="SUPFAM" id="SSF51735">
    <property type="entry name" value="NAD(P)-binding Rossmann-fold domains"/>
    <property type="match status" value="1"/>
</dbReference>
<gene>
    <name evidence="3" type="primary">denD</name>
    <name evidence="5" type="ordered locus">H16_A1557</name>
</gene>
<keyword id="KW-0119">Carbohydrate metabolism</keyword>
<keyword id="KW-0520">NAD</keyword>
<keyword id="KW-0521">NADP</keyword>
<keyword id="KW-0560">Oxidoreductase</keyword>
<keyword id="KW-1185">Reference proteome</keyword>
<accession>Q0KBD2</accession>
<organism>
    <name type="scientific">Cupriavidus necator (strain ATCC 17699 / DSM 428 / KCTC 22496 / NCIMB 10442 / H16 / Stanier 337)</name>
    <name type="common">Ralstonia eutropha</name>
    <dbReference type="NCBI Taxonomy" id="381666"/>
    <lineage>
        <taxon>Bacteria</taxon>
        <taxon>Pseudomonadati</taxon>
        <taxon>Pseudomonadota</taxon>
        <taxon>Betaproteobacteria</taxon>
        <taxon>Burkholderiales</taxon>
        <taxon>Burkholderiaceae</taxon>
        <taxon>Cupriavidus</taxon>
    </lineage>
</organism>
<sequence>MNVLITGGAGFLGLQLARLLLQRGTLNLDGQPVAIKRLTLLDVVAPQGLDDARVRVVTGDLSDPAVLRQAIDTDTGAVFHLAAVVSGQAEADFDLGMRVNLDASRALLETCRELGHQPRVLFTSSVAVYGGQLPPVVQDDTALNPQSSYGVQKAIGELLLSDYSRRGFVDGRVLRLPTISVRPGKPNAAASSFASGIIREPLSGVAANCPVAPETPLWLLSPRAAVAALVNGIELAGERLGNRRVVNLPGLSVTAAGMIEALRRVAGNAVADRVTWEREARVENIVGTWPAAWNAERALALGFQSDASFDEVIRAYMEDAGLAK</sequence>